<proteinExistence type="inferred from homology"/>
<accession>A6T4D6</accession>
<comment type="function">
    <text evidence="1">Exhibits a very high intrinsic GTPase hydrolysis rate. Involved in the addition of a carboxymethylaminomethyl (cmnm) group at the wobble position (U34) of certain tRNAs, forming tRNA-cmnm(5)s(2)U34.</text>
</comment>
<comment type="cofactor">
    <cofactor evidence="1">
        <name>K(+)</name>
        <dbReference type="ChEBI" id="CHEBI:29103"/>
    </cofactor>
    <text evidence="1">Binds 1 potassium ion per subunit.</text>
</comment>
<comment type="subunit">
    <text evidence="1">Homodimer. Heterotetramer of two MnmE and two MnmG subunits.</text>
</comment>
<comment type="subcellular location">
    <subcellularLocation>
        <location evidence="1">Cytoplasm</location>
    </subcellularLocation>
</comment>
<comment type="similarity">
    <text evidence="1">Belongs to the TRAFAC class TrmE-Era-EngA-EngB-Septin-like GTPase superfamily. TrmE GTPase family.</text>
</comment>
<evidence type="ECO:0000255" key="1">
    <source>
        <dbReference type="HAMAP-Rule" id="MF_00379"/>
    </source>
</evidence>
<keyword id="KW-0963">Cytoplasm</keyword>
<keyword id="KW-0342">GTP-binding</keyword>
<keyword id="KW-0378">Hydrolase</keyword>
<keyword id="KW-0460">Magnesium</keyword>
<keyword id="KW-0479">Metal-binding</keyword>
<keyword id="KW-0547">Nucleotide-binding</keyword>
<keyword id="KW-0630">Potassium</keyword>
<keyword id="KW-0819">tRNA processing</keyword>
<protein>
    <recommendedName>
        <fullName evidence="1">tRNA modification GTPase MnmE</fullName>
        <ecNumber evidence="1">3.6.-.-</ecNumber>
    </recommendedName>
</protein>
<sequence length="465" mass="50144">MNFDSSPIAAIATAPGRGGIGVVRVSGKNISSIIEAVCATKGAELQPRHATFTNFVNADGSVIDQGLAIYFKAPHSYTGEDVLELQGHGGPIVLQMLLTRCLEAGTDIGLRMAQPGEFTHRAFLNDKLDLAQAEGVIDLIEASTEAAAKSASQSLSGAFSKTIQDLVDKITNLRMLVEATLDFPEEEIDFLEKSDARGQLNGIREALQAVFTQASQGALLRDGLNIVLAGQPNVGKSSLLNALAGSDVAIVTAIAGTTRDKVIETIQIEGIPVNVIDTAGIRDASDATDEVERIGIERTWAAVKTADVIIHMLDANRGPTRADEQIVERFPENIPVMRIWNKIDLSGHRPAIDRMPDSTHIYVSATDLQGMDLLRGELLRLIGWQQTGESLYLARERHLVALKSAHDHLEMAAQHAAHDSEATDPALDLFAEELRLAQERLSSITGEFTSDDLLGVIFSRFCIGK</sequence>
<dbReference type="EC" id="3.6.-.-" evidence="1"/>
<dbReference type="EMBL" id="CP000269">
    <property type="protein sequence ID" value="ABR89668.1"/>
    <property type="molecule type" value="Genomic_DNA"/>
</dbReference>
<dbReference type="RefSeq" id="WP_012081528.1">
    <property type="nucleotide sequence ID" value="NC_009659.1"/>
</dbReference>
<dbReference type="SMR" id="A6T4D6"/>
<dbReference type="STRING" id="375286.mma_3693"/>
<dbReference type="KEGG" id="mms:mma_3693"/>
<dbReference type="eggNOG" id="COG0486">
    <property type="taxonomic scope" value="Bacteria"/>
</dbReference>
<dbReference type="HOGENOM" id="CLU_019624_4_1_4"/>
<dbReference type="OrthoDB" id="9805918at2"/>
<dbReference type="Proteomes" id="UP000006388">
    <property type="component" value="Chromosome"/>
</dbReference>
<dbReference type="GO" id="GO:0005829">
    <property type="term" value="C:cytosol"/>
    <property type="evidence" value="ECO:0007669"/>
    <property type="project" value="TreeGrafter"/>
</dbReference>
<dbReference type="GO" id="GO:0005525">
    <property type="term" value="F:GTP binding"/>
    <property type="evidence" value="ECO:0007669"/>
    <property type="project" value="UniProtKB-UniRule"/>
</dbReference>
<dbReference type="GO" id="GO:0003924">
    <property type="term" value="F:GTPase activity"/>
    <property type="evidence" value="ECO:0007669"/>
    <property type="project" value="UniProtKB-UniRule"/>
</dbReference>
<dbReference type="GO" id="GO:0046872">
    <property type="term" value="F:metal ion binding"/>
    <property type="evidence" value="ECO:0007669"/>
    <property type="project" value="UniProtKB-KW"/>
</dbReference>
<dbReference type="GO" id="GO:0030488">
    <property type="term" value="P:tRNA methylation"/>
    <property type="evidence" value="ECO:0007669"/>
    <property type="project" value="TreeGrafter"/>
</dbReference>
<dbReference type="GO" id="GO:0002098">
    <property type="term" value="P:tRNA wobble uridine modification"/>
    <property type="evidence" value="ECO:0007669"/>
    <property type="project" value="TreeGrafter"/>
</dbReference>
<dbReference type="CDD" id="cd04164">
    <property type="entry name" value="trmE"/>
    <property type="match status" value="1"/>
</dbReference>
<dbReference type="CDD" id="cd14858">
    <property type="entry name" value="TrmE_N"/>
    <property type="match status" value="1"/>
</dbReference>
<dbReference type="Gene3D" id="3.40.50.300">
    <property type="entry name" value="P-loop containing nucleotide triphosphate hydrolases"/>
    <property type="match status" value="1"/>
</dbReference>
<dbReference type="Gene3D" id="3.30.1360.120">
    <property type="entry name" value="Probable tRNA modification gtpase trme, domain 1"/>
    <property type="match status" value="1"/>
</dbReference>
<dbReference type="Gene3D" id="1.20.120.430">
    <property type="entry name" value="tRNA modification GTPase MnmE domain 2"/>
    <property type="match status" value="1"/>
</dbReference>
<dbReference type="HAMAP" id="MF_00379">
    <property type="entry name" value="GTPase_MnmE"/>
    <property type="match status" value="1"/>
</dbReference>
<dbReference type="InterPro" id="IPR031168">
    <property type="entry name" value="G_TrmE"/>
</dbReference>
<dbReference type="InterPro" id="IPR006073">
    <property type="entry name" value="GTP-bd"/>
</dbReference>
<dbReference type="InterPro" id="IPR018948">
    <property type="entry name" value="GTP-bd_TrmE_N"/>
</dbReference>
<dbReference type="InterPro" id="IPR004520">
    <property type="entry name" value="GTPase_MnmE"/>
</dbReference>
<dbReference type="InterPro" id="IPR027368">
    <property type="entry name" value="MnmE_dom2"/>
</dbReference>
<dbReference type="InterPro" id="IPR025867">
    <property type="entry name" value="MnmE_helical"/>
</dbReference>
<dbReference type="InterPro" id="IPR027417">
    <property type="entry name" value="P-loop_NTPase"/>
</dbReference>
<dbReference type="InterPro" id="IPR005225">
    <property type="entry name" value="Small_GTP-bd"/>
</dbReference>
<dbReference type="InterPro" id="IPR027266">
    <property type="entry name" value="TrmE/GcvT_dom1"/>
</dbReference>
<dbReference type="NCBIfam" id="TIGR00450">
    <property type="entry name" value="mnmE_trmE_thdF"/>
    <property type="match status" value="1"/>
</dbReference>
<dbReference type="NCBIfam" id="NF003661">
    <property type="entry name" value="PRK05291.1-3"/>
    <property type="match status" value="1"/>
</dbReference>
<dbReference type="NCBIfam" id="TIGR00231">
    <property type="entry name" value="small_GTP"/>
    <property type="match status" value="1"/>
</dbReference>
<dbReference type="PANTHER" id="PTHR42714">
    <property type="entry name" value="TRNA MODIFICATION GTPASE GTPBP3"/>
    <property type="match status" value="1"/>
</dbReference>
<dbReference type="PANTHER" id="PTHR42714:SF2">
    <property type="entry name" value="TRNA MODIFICATION GTPASE GTPBP3, MITOCHONDRIAL"/>
    <property type="match status" value="1"/>
</dbReference>
<dbReference type="Pfam" id="PF01926">
    <property type="entry name" value="MMR_HSR1"/>
    <property type="match status" value="1"/>
</dbReference>
<dbReference type="Pfam" id="PF12631">
    <property type="entry name" value="MnmE_helical"/>
    <property type="match status" value="1"/>
</dbReference>
<dbReference type="Pfam" id="PF10396">
    <property type="entry name" value="TrmE_N"/>
    <property type="match status" value="1"/>
</dbReference>
<dbReference type="PRINTS" id="PR00326">
    <property type="entry name" value="GTP1OBG"/>
</dbReference>
<dbReference type="SUPFAM" id="SSF52540">
    <property type="entry name" value="P-loop containing nucleoside triphosphate hydrolases"/>
    <property type="match status" value="1"/>
</dbReference>
<dbReference type="PROSITE" id="PS51709">
    <property type="entry name" value="G_TRME"/>
    <property type="match status" value="1"/>
</dbReference>
<gene>
    <name evidence="1" type="primary">mnmE</name>
    <name evidence="1" type="synonym">trmE</name>
    <name type="ordered locus">mma_3693</name>
</gene>
<feature type="chain" id="PRO_0000345804" description="tRNA modification GTPase MnmE">
    <location>
        <begin position="1"/>
        <end position="465"/>
    </location>
</feature>
<feature type="domain" description="TrmE-type G">
    <location>
        <begin position="223"/>
        <end position="383"/>
    </location>
</feature>
<feature type="binding site" evidence="1">
    <location>
        <position position="24"/>
    </location>
    <ligand>
        <name>(6S)-5-formyl-5,6,7,8-tetrahydrofolate</name>
        <dbReference type="ChEBI" id="CHEBI:57457"/>
    </ligand>
</feature>
<feature type="binding site" evidence="1">
    <location>
        <position position="84"/>
    </location>
    <ligand>
        <name>(6S)-5-formyl-5,6,7,8-tetrahydrofolate</name>
        <dbReference type="ChEBI" id="CHEBI:57457"/>
    </ligand>
</feature>
<feature type="binding site" evidence="1">
    <location>
        <position position="127"/>
    </location>
    <ligand>
        <name>(6S)-5-formyl-5,6,7,8-tetrahydrofolate</name>
        <dbReference type="ChEBI" id="CHEBI:57457"/>
    </ligand>
</feature>
<feature type="binding site" evidence="1">
    <location>
        <begin position="233"/>
        <end position="238"/>
    </location>
    <ligand>
        <name>GTP</name>
        <dbReference type="ChEBI" id="CHEBI:37565"/>
    </ligand>
</feature>
<feature type="binding site" evidence="1">
    <location>
        <position position="233"/>
    </location>
    <ligand>
        <name>K(+)</name>
        <dbReference type="ChEBI" id="CHEBI:29103"/>
    </ligand>
</feature>
<feature type="binding site" evidence="1">
    <location>
        <position position="237"/>
    </location>
    <ligand>
        <name>Mg(2+)</name>
        <dbReference type="ChEBI" id="CHEBI:18420"/>
    </ligand>
</feature>
<feature type="binding site" evidence="1">
    <location>
        <begin position="252"/>
        <end position="258"/>
    </location>
    <ligand>
        <name>GTP</name>
        <dbReference type="ChEBI" id="CHEBI:37565"/>
    </ligand>
</feature>
<feature type="binding site" evidence="1">
    <location>
        <position position="252"/>
    </location>
    <ligand>
        <name>K(+)</name>
        <dbReference type="ChEBI" id="CHEBI:29103"/>
    </ligand>
</feature>
<feature type="binding site" evidence="1">
    <location>
        <position position="254"/>
    </location>
    <ligand>
        <name>K(+)</name>
        <dbReference type="ChEBI" id="CHEBI:29103"/>
    </ligand>
</feature>
<feature type="binding site" evidence="1">
    <location>
        <position position="257"/>
    </location>
    <ligand>
        <name>K(+)</name>
        <dbReference type="ChEBI" id="CHEBI:29103"/>
    </ligand>
</feature>
<feature type="binding site" evidence="1">
    <location>
        <position position="258"/>
    </location>
    <ligand>
        <name>Mg(2+)</name>
        <dbReference type="ChEBI" id="CHEBI:18420"/>
    </ligand>
</feature>
<feature type="binding site" evidence="1">
    <location>
        <begin position="277"/>
        <end position="280"/>
    </location>
    <ligand>
        <name>GTP</name>
        <dbReference type="ChEBI" id="CHEBI:37565"/>
    </ligand>
</feature>
<feature type="binding site" evidence="1">
    <location>
        <position position="465"/>
    </location>
    <ligand>
        <name>(6S)-5-formyl-5,6,7,8-tetrahydrofolate</name>
        <dbReference type="ChEBI" id="CHEBI:57457"/>
    </ligand>
</feature>
<reference key="1">
    <citation type="journal article" date="2007" name="PLoS Genet.">
        <title>Genome analysis of Minibacterium massiliensis highlights the convergent evolution of water-living bacteria.</title>
        <authorList>
            <person name="Audic S."/>
            <person name="Robert C."/>
            <person name="Campagna B."/>
            <person name="Parinello H."/>
            <person name="Claverie J.-M."/>
            <person name="Raoult D."/>
            <person name="Drancourt M."/>
        </authorList>
    </citation>
    <scope>NUCLEOTIDE SEQUENCE [LARGE SCALE GENOMIC DNA]</scope>
    <source>
        <strain>Marseille</strain>
    </source>
</reference>
<organism>
    <name type="scientific">Janthinobacterium sp. (strain Marseille)</name>
    <name type="common">Minibacterium massiliensis</name>
    <dbReference type="NCBI Taxonomy" id="375286"/>
    <lineage>
        <taxon>Bacteria</taxon>
        <taxon>Pseudomonadati</taxon>
        <taxon>Pseudomonadota</taxon>
        <taxon>Betaproteobacteria</taxon>
        <taxon>Burkholderiales</taxon>
        <taxon>Oxalobacteraceae</taxon>
        <taxon>Janthinobacterium</taxon>
    </lineage>
</organism>
<name>MNME_JANMA</name>